<gene>
    <name evidence="1" type="primary">betA</name>
    <name type="ordered locus">RHECIAT_CH0001219</name>
</gene>
<sequence length="549" mass="60232">MQADFVIIGSGSAGSALAYRLSEDGKNSVLVIEAGGSDFGPFIQMPAALAWPMSMKRYNWGYLSEPEPNLNNRRITAPRGKVIGGSSSINGMVYVRGHAEDFNRWEELGASGWAYADVLPYFKRMEHSHGGEEGWRGTDGPLHVQRGGFTNPLFRAFIEAGKQAGFETTDDYNGSKQEGFGLMEQTIFSGRRWSAANAYLKPALKRKNVGMVYGLARKIVIEDGRATGVEIERGGKVEVVKATREVIVSASSFNSPKLLMLSGIGPGQHLNDMGIAVKADRPGVGANLQDHMEFYFQQVSTKPVSLYSWLPWFWQGVAGAQWLLSKGGLGASNQFEACAFLRSAPGLKQPDIQYHFLPVAISYDGKAAAKSHGFQVHVGYNLSKSRGSVTLRSPDPKAEPVLRFNYMSHPEDWEKFRHCVRLTREIFGQTAFDAYRGPEIQPGEGVQSDEQIDAFLREHLESAYHPCGTCKMGAKDDPMAVVDPQTRVIGVDGLRVADSSIFPHVTYGNLNGPSIMTGEKAADHILGKQPLARSNQEPWINPRAAVSDR</sequence>
<proteinExistence type="inferred from homology"/>
<reference key="1">
    <citation type="journal article" date="2010" name="Appl. Environ. Microbiol.">
        <title>Conserved symbiotic plasmid DNA sequences in the multireplicon pangenomic structure of Rhizobium etli.</title>
        <authorList>
            <person name="Gonzalez V."/>
            <person name="Acosta J.L."/>
            <person name="Santamaria R.I."/>
            <person name="Bustos P."/>
            <person name="Fernandez J.L."/>
            <person name="Hernandez Gonzalez I.L."/>
            <person name="Diaz R."/>
            <person name="Flores M."/>
            <person name="Palacios R."/>
            <person name="Mora J."/>
            <person name="Davila G."/>
        </authorList>
    </citation>
    <scope>NUCLEOTIDE SEQUENCE [LARGE SCALE GENOMIC DNA]</scope>
    <source>
        <strain>CIAT 652</strain>
    </source>
</reference>
<accession>B3PTE0</accession>
<organism>
    <name type="scientific">Rhizobium etli (strain CIAT 652)</name>
    <dbReference type="NCBI Taxonomy" id="491916"/>
    <lineage>
        <taxon>Bacteria</taxon>
        <taxon>Pseudomonadati</taxon>
        <taxon>Pseudomonadota</taxon>
        <taxon>Alphaproteobacteria</taxon>
        <taxon>Hyphomicrobiales</taxon>
        <taxon>Rhizobiaceae</taxon>
        <taxon>Rhizobium/Agrobacterium group</taxon>
        <taxon>Rhizobium</taxon>
    </lineage>
</organism>
<comment type="function">
    <text evidence="1">Involved in the biosynthesis of the osmoprotectant glycine betaine. Catalyzes the oxidation of choline to betaine aldehyde and betaine aldehyde to glycine betaine at the same rate.</text>
</comment>
<comment type="catalytic activity">
    <reaction evidence="1">
        <text>choline + A = betaine aldehyde + AH2</text>
        <dbReference type="Rhea" id="RHEA:17433"/>
        <dbReference type="ChEBI" id="CHEBI:13193"/>
        <dbReference type="ChEBI" id="CHEBI:15354"/>
        <dbReference type="ChEBI" id="CHEBI:15710"/>
        <dbReference type="ChEBI" id="CHEBI:17499"/>
        <dbReference type="EC" id="1.1.99.1"/>
    </reaction>
</comment>
<comment type="catalytic activity">
    <reaction evidence="1">
        <text>betaine aldehyde + NAD(+) + H2O = glycine betaine + NADH + 2 H(+)</text>
        <dbReference type="Rhea" id="RHEA:15305"/>
        <dbReference type="ChEBI" id="CHEBI:15377"/>
        <dbReference type="ChEBI" id="CHEBI:15378"/>
        <dbReference type="ChEBI" id="CHEBI:15710"/>
        <dbReference type="ChEBI" id="CHEBI:17750"/>
        <dbReference type="ChEBI" id="CHEBI:57540"/>
        <dbReference type="ChEBI" id="CHEBI:57945"/>
        <dbReference type="EC" id="1.2.1.8"/>
    </reaction>
</comment>
<comment type="cofactor">
    <cofactor evidence="1">
        <name>FAD</name>
        <dbReference type="ChEBI" id="CHEBI:57692"/>
    </cofactor>
</comment>
<comment type="pathway">
    <text evidence="1">Amine and polyamine biosynthesis; betaine biosynthesis via choline pathway; betaine aldehyde from choline (cytochrome c reductase route): step 1/1.</text>
</comment>
<comment type="similarity">
    <text evidence="1">Belongs to the GMC oxidoreductase family.</text>
</comment>
<protein>
    <recommendedName>
        <fullName evidence="1">Oxygen-dependent choline dehydrogenase</fullName>
        <shortName evidence="1">CDH</shortName>
        <shortName evidence="1">CHD</shortName>
        <ecNumber evidence="1">1.1.99.1</ecNumber>
    </recommendedName>
    <alternativeName>
        <fullName evidence="1">Betaine aldehyde dehydrogenase</fullName>
        <shortName evidence="1">BADH</shortName>
        <ecNumber evidence="1">1.2.1.8</ecNumber>
    </alternativeName>
</protein>
<feature type="chain" id="PRO_1000133336" description="Oxygen-dependent choline dehydrogenase">
    <location>
        <begin position="1"/>
        <end position="549"/>
    </location>
</feature>
<feature type="active site" description="Proton acceptor" evidence="1">
    <location>
        <position position="465"/>
    </location>
</feature>
<feature type="binding site" evidence="1">
    <location>
        <begin position="4"/>
        <end position="33"/>
    </location>
    <ligand>
        <name>FAD</name>
        <dbReference type="ChEBI" id="CHEBI:57692"/>
    </ligand>
</feature>
<name>BETA_RHIE6</name>
<evidence type="ECO:0000255" key="1">
    <source>
        <dbReference type="HAMAP-Rule" id="MF_00750"/>
    </source>
</evidence>
<dbReference type="EC" id="1.1.99.1" evidence="1"/>
<dbReference type="EC" id="1.2.1.8" evidence="1"/>
<dbReference type="EMBL" id="CP001074">
    <property type="protein sequence ID" value="ACE90200.1"/>
    <property type="molecule type" value="Genomic_DNA"/>
</dbReference>
<dbReference type="SMR" id="B3PTE0"/>
<dbReference type="CAZy" id="AA3">
    <property type="family name" value="Auxiliary Activities 3"/>
</dbReference>
<dbReference type="KEGG" id="rec:RHECIAT_CH0001219"/>
<dbReference type="eggNOG" id="COG2303">
    <property type="taxonomic scope" value="Bacteria"/>
</dbReference>
<dbReference type="HOGENOM" id="CLU_002865_7_1_5"/>
<dbReference type="UniPathway" id="UPA00529">
    <property type="reaction ID" value="UER00385"/>
</dbReference>
<dbReference type="Proteomes" id="UP000008817">
    <property type="component" value="Chromosome"/>
</dbReference>
<dbReference type="GO" id="GO:0016020">
    <property type="term" value="C:membrane"/>
    <property type="evidence" value="ECO:0007669"/>
    <property type="project" value="TreeGrafter"/>
</dbReference>
<dbReference type="GO" id="GO:0008802">
    <property type="term" value="F:betaine-aldehyde dehydrogenase (NAD+) activity"/>
    <property type="evidence" value="ECO:0007669"/>
    <property type="project" value="UniProtKB-EC"/>
</dbReference>
<dbReference type="GO" id="GO:0008812">
    <property type="term" value="F:choline dehydrogenase activity"/>
    <property type="evidence" value="ECO:0007669"/>
    <property type="project" value="UniProtKB-UniRule"/>
</dbReference>
<dbReference type="GO" id="GO:0050660">
    <property type="term" value="F:flavin adenine dinucleotide binding"/>
    <property type="evidence" value="ECO:0007669"/>
    <property type="project" value="InterPro"/>
</dbReference>
<dbReference type="GO" id="GO:0019285">
    <property type="term" value="P:glycine betaine biosynthetic process from choline"/>
    <property type="evidence" value="ECO:0007669"/>
    <property type="project" value="UniProtKB-UniRule"/>
</dbReference>
<dbReference type="Gene3D" id="3.50.50.60">
    <property type="entry name" value="FAD/NAD(P)-binding domain"/>
    <property type="match status" value="1"/>
</dbReference>
<dbReference type="Gene3D" id="3.30.560.10">
    <property type="entry name" value="Glucose Oxidase, domain 3"/>
    <property type="match status" value="1"/>
</dbReference>
<dbReference type="HAMAP" id="MF_00750">
    <property type="entry name" value="Choline_dehydrogen"/>
    <property type="match status" value="1"/>
</dbReference>
<dbReference type="InterPro" id="IPR011533">
    <property type="entry name" value="BetA"/>
</dbReference>
<dbReference type="InterPro" id="IPR036188">
    <property type="entry name" value="FAD/NAD-bd_sf"/>
</dbReference>
<dbReference type="InterPro" id="IPR012132">
    <property type="entry name" value="GMC_OxRdtase"/>
</dbReference>
<dbReference type="InterPro" id="IPR000172">
    <property type="entry name" value="GMC_OxRdtase_N"/>
</dbReference>
<dbReference type="InterPro" id="IPR007867">
    <property type="entry name" value="GMC_OxRtase_C"/>
</dbReference>
<dbReference type="NCBIfam" id="TIGR01810">
    <property type="entry name" value="betA"/>
    <property type="match status" value="1"/>
</dbReference>
<dbReference type="NCBIfam" id="NF002550">
    <property type="entry name" value="PRK02106.1"/>
    <property type="match status" value="1"/>
</dbReference>
<dbReference type="PANTHER" id="PTHR11552:SF147">
    <property type="entry name" value="CHOLINE DEHYDROGENASE, MITOCHONDRIAL"/>
    <property type="match status" value="1"/>
</dbReference>
<dbReference type="PANTHER" id="PTHR11552">
    <property type="entry name" value="GLUCOSE-METHANOL-CHOLINE GMC OXIDOREDUCTASE"/>
    <property type="match status" value="1"/>
</dbReference>
<dbReference type="Pfam" id="PF05199">
    <property type="entry name" value="GMC_oxred_C"/>
    <property type="match status" value="1"/>
</dbReference>
<dbReference type="Pfam" id="PF00732">
    <property type="entry name" value="GMC_oxred_N"/>
    <property type="match status" value="1"/>
</dbReference>
<dbReference type="PIRSF" id="PIRSF000137">
    <property type="entry name" value="Alcohol_oxidase"/>
    <property type="match status" value="1"/>
</dbReference>
<dbReference type="SUPFAM" id="SSF54373">
    <property type="entry name" value="FAD-linked reductases, C-terminal domain"/>
    <property type="match status" value="1"/>
</dbReference>
<dbReference type="SUPFAM" id="SSF51905">
    <property type="entry name" value="FAD/NAD(P)-binding domain"/>
    <property type="match status" value="1"/>
</dbReference>
<dbReference type="PROSITE" id="PS00623">
    <property type="entry name" value="GMC_OXRED_1"/>
    <property type="match status" value="1"/>
</dbReference>
<dbReference type="PROSITE" id="PS00624">
    <property type="entry name" value="GMC_OXRED_2"/>
    <property type="match status" value="1"/>
</dbReference>
<keyword id="KW-0274">FAD</keyword>
<keyword id="KW-0285">Flavoprotein</keyword>
<keyword id="KW-0520">NAD</keyword>
<keyword id="KW-0560">Oxidoreductase</keyword>